<sequence length="481" mass="52297">MVKICCLGAGYVGGPTMAVIALKCPDVEVVVVDISAARIDAWNSDALPIYEPGLDDVVRRCRGRNLFFSSDVERHVGEADIVFVSVNTPTKARGLGAGKAADLTYWESAARMIAAVATSDKVVVEKSTVPVKTAEAIEKILDHNGRDGVGFQILSNPEFLAEGTAIRDLLAPDRVLIGGRETAAGRAAVQALKDVYTRWVPEERILTTNLWSAELSKLAANAFLAQRISSVNAMSALCEATGADVAEVAYAVGKDSRIGAKFLNASVGFGGSCFQKDILNLVYICECNGLPEVANYWKQVIKINDYQKSRFVNRVVSSMFNTVAGKKIAVLGFAFKKDTGDTRETPAIDVCKGLIGDKAKVSIYDPQVTEDQVQRDLAMSKFDWDHPVHLQPMSPTAIKQVSVAWDAYEAARAAHGVCILTEWDEFRSLDYARIYGGMQKPAFVFDGRNVVDAEKLREIGFIVYSIGKPLDAWLKDMPAVA</sequence>
<name>UGDH1_ORYSJ</name>
<keyword id="KW-0520">NAD</keyword>
<keyword id="KW-0560">Oxidoreductase</keyword>
<keyword id="KW-0597">Phosphoprotein</keyword>
<keyword id="KW-1185">Reference proteome</keyword>
<proteinExistence type="inferred from homology"/>
<dbReference type="EC" id="1.1.1.22"/>
<dbReference type="EMBL" id="AC137999">
    <property type="protein sequence ID" value="AAS07200.1"/>
    <property type="molecule type" value="Genomic_DNA"/>
</dbReference>
<dbReference type="EMBL" id="DP000009">
    <property type="protein sequence ID" value="ABF96712.1"/>
    <property type="status" value="ALT_SEQ"/>
    <property type="molecule type" value="Genomic_DNA"/>
</dbReference>
<dbReference type="EMBL" id="AP008209">
    <property type="protein sequence ID" value="BAF12319.2"/>
    <property type="status" value="ALT_INIT"/>
    <property type="molecule type" value="Genomic_DNA"/>
</dbReference>
<dbReference type="EMBL" id="AP014959">
    <property type="protein sequence ID" value="BAS84780.1"/>
    <property type="molecule type" value="Genomic_DNA"/>
</dbReference>
<dbReference type="RefSeq" id="XP_015630087.1">
    <property type="nucleotide sequence ID" value="XM_015774601.1"/>
</dbReference>
<dbReference type="SMR" id="Q75GS4"/>
<dbReference type="FunCoup" id="Q75GS4">
    <property type="interactions" value="1807"/>
</dbReference>
<dbReference type="STRING" id="39947.Q75GS4"/>
<dbReference type="PaxDb" id="39947-Q75GS4"/>
<dbReference type="EnsemblPlants" id="Os03t0425600-00">
    <property type="protein sequence ID" value="Os03t0425600-00"/>
    <property type="gene ID" value="Os03g0425600"/>
</dbReference>
<dbReference type="Gramene" id="Os03t0425600-00">
    <property type="protein sequence ID" value="Os03t0425600-00"/>
    <property type="gene ID" value="Os03g0425600"/>
</dbReference>
<dbReference type="KEGG" id="dosa:Os03g0425600"/>
<dbReference type="eggNOG" id="KOG2666">
    <property type="taxonomic scope" value="Eukaryota"/>
</dbReference>
<dbReference type="HOGENOM" id="CLU_023810_7_0_1"/>
<dbReference type="InParanoid" id="Q75GS4"/>
<dbReference type="OMA" id="RDGVGFQ"/>
<dbReference type="OrthoDB" id="5059218at2759"/>
<dbReference type="PlantReactome" id="R-OSA-1119574">
    <property type="pathway name" value="UDP-L-arabinose biosynthesis and transport"/>
</dbReference>
<dbReference type="UniPathway" id="UPA00038">
    <property type="reaction ID" value="UER00491"/>
</dbReference>
<dbReference type="Proteomes" id="UP000000763">
    <property type="component" value="Chromosome 3"/>
</dbReference>
<dbReference type="Proteomes" id="UP000059680">
    <property type="component" value="Chromosome 3"/>
</dbReference>
<dbReference type="GO" id="GO:0005634">
    <property type="term" value="C:nucleus"/>
    <property type="evidence" value="ECO:0000318"/>
    <property type="project" value="GO_Central"/>
</dbReference>
<dbReference type="GO" id="GO:0051287">
    <property type="term" value="F:NAD binding"/>
    <property type="evidence" value="ECO:0007669"/>
    <property type="project" value="InterPro"/>
</dbReference>
<dbReference type="GO" id="GO:0003979">
    <property type="term" value="F:UDP-glucose 6-dehydrogenase activity"/>
    <property type="evidence" value="ECO:0007669"/>
    <property type="project" value="UniProtKB-EC"/>
</dbReference>
<dbReference type="GO" id="GO:0006024">
    <property type="term" value="P:glycosaminoglycan biosynthetic process"/>
    <property type="evidence" value="ECO:0000318"/>
    <property type="project" value="GO_Central"/>
</dbReference>
<dbReference type="GO" id="GO:0006065">
    <property type="term" value="P:UDP-glucuronate biosynthetic process"/>
    <property type="evidence" value="ECO:0007669"/>
    <property type="project" value="UniProtKB-UniPathway"/>
</dbReference>
<dbReference type="FunFam" id="1.20.5.100:FF:000001">
    <property type="entry name" value="UDP-glucose 6-dehydrogenase"/>
    <property type="match status" value="1"/>
</dbReference>
<dbReference type="FunFam" id="3.40.50.720:FF:000032">
    <property type="entry name" value="UDP-glucose 6-dehydrogenase"/>
    <property type="match status" value="1"/>
</dbReference>
<dbReference type="FunFam" id="3.40.50.720:FF:000089">
    <property type="entry name" value="UDP-glucose 6-dehydrogenase"/>
    <property type="match status" value="1"/>
</dbReference>
<dbReference type="Gene3D" id="1.20.5.100">
    <property type="entry name" value="Cytochrome c1, transmembrane anchor, C-terminal"/>
    <property type="match status" value="1"/>
</dbReference>
<dbReference type="Gene3D" id="3.40.50.720">
    <property type="entry name" value="NAD(P)-binding Rossmann-like Domain"/>
    <property type="match status" value="2"/>
</dbReference>
<dbReference type="InterPro" id="IPR008927">
    <property type="entry name" value="6-PGluconate_DH-like_C_sf"/>
</dbReference>
<dbReference type="InterPro" id="IPR036291">
    <property type="entry name" value="NAD(P)-bd_dom_sf"/>
</dbReference>
<dbReference type="InterPro" id="IPR017476">
    <property type="entry name" value="UDP-Glc/GDP-Man"/>
</dbReference>
<dbReference type="InterPro" id="IPR014027">
    <property type="entry name" value="UDP-Glc/GDP-Man_DH_C"/>
</dbReference>
<dbReference type="InterPro" id="IPR036220">
    <property type="entry name" value="UDP-Glc/GDP-Man_DH_C_sf"/>
</dbReference>
<dbReference type="InterPro" id="IPR014026">
    <property type="entry name" value="UDP-Glc/GDP-Man_DH_dimer"/>
</dbReference>
<dbReference type="InterPro" id="IPR001732">
    <property type="entry name" value="UDP-Glc/GDP-Man_DH_N"/>
</dbReference>
<dbReference type="InterPro" id="IPR028356">
    <property type="entry name" value="UDPglc_DH_euk"/>
</dbReference>
<dbReference type="NCBIfam" id="TIGR03026">
    <property type="entry name" value="NDP-sugDHase"/>
    <property type="match status" value="1"/>
</dbReference>
<dbReference type="PANTHER" id="PTHR11374:SF61">
    <property type="entry name" value="UDP-GLUCOSE 6-DEHYDROGENASE 1"/>
    <property type="match status" value="1"/>
</dbReference>
<dbReference type="PANTHER" id="PTHR11374">
    <property type="entry name" value="UDP-GLUCOSE DEHYDROGENASE/UDP-MANNAC DEHYDROGENASE"/>
    <property type="match status" value="1"/>
</dbReference>
<dbReference type="Pfam" id="PF00984">
    <property type="entry name" value="UDPG_MGDP_dh"/>
    <property type="match status" value="1"/>
</dbReference>
<dbReference type="Pfam" id="PF03720">
    <property type="entry name" value="UDPG_MGDP_dh_C"/>
    <property type="match status" value="1"/>
</dbReference>
<dbReference type="Pfam" id="PF03721">
    <property type="entry name" value="UDPG_MGDP_dh_N"/>
    <property type="match status" value="1"/>
</dbReference>
<dbReference type="PIRSF" id="PIRSF500133">
    <property type="entry name" value="UDPglc_DH_euk"/>
    <property type="match status" value="1"/>
</dbReference>
<dbReference type="PIRSF" id="PIRSF000124">
    <property type="entry name" value="UDPglc_GDPman_dh"/>
    <property type="match status" value="1"/>
</dbReference>
<dbReference type="SMART" id="SM00984">
    <property type="entry name" value="UDPG_MGDP_dh_C"/>
    <property type="match status" value="1"/>
</dbReference>
<dbReference type="SUPFAM" id="SSF48179">
    <property type="entry name" value="6-phosphogluconate dehydrogenase C-terminal domain-like"/>
    <property type="match status" value="1"/>
</dbReference>
<dbReference type="SUPFAM" id="SSF51735">
    <property type="entry name" value="NAD(P)-binding Rossmann-fold domains"/>
    <property type="match status" value="1"/>
</dbReference>
<dbReference type="SUPFAM" id="SSF52413">
    <property type="entry name" value="UDP-glucose/GDP-mannose dehydrogenase C-terminal domain"/>
    <property type="match status" value="1"/>
</dbReference>
<accession>Q75GS4</accession>
<accession>A0A0P0VYX6</accession>
<accession>Q0DR19</accession>
<accession>Q10JC3</accession>
<reference key="1">
    <citation type="journal article" date="2005" name="Genome Res.">
        <title>Sequence, annotation, and analysis of synteny between rice chromosome 3 and diverged grass species.</title>
        <authorList>
            <consortium name="The rice chromosome 3 sequencing consortium"/>
            <person name="Buell C.R."/>
            <person name="Yuan Q."/>
            <person name="Ouyang S."/>
            <person name="Liu J."/>
            <person name="Zhu W."/>
            <person name="Wang A."/>
            <person name="Maiti R."/>
            <person name="Haas B."/>
            <person name="Wortman J."/>
            <person name="Pertea M."/>
            <person name="Jones K.M."/>
            <person name="Kim M."/>
            <person name="Overton L."/>
            <person name="Tsitrin T."/>
            <person name="Fadrosh D."/>
            <person name="Bera J."/>
            <person name="Weaver B."/>
            <person name="Jin S."/>
            <person name="Johri S."/>
            <person name="Reardon M."/>
            <person name="Webb K."/>
            <person name="Hill J."/>
            <person name="Moffat K."/>
            <person name="Tallon L."/>
            <person name="Van Aken S."/>
            <person name="Lewis M."/>
            <person name="Utterback T."/>
            <person name="Feldblyum T."/>
            <person name="Zismann V."/>
            <person name="Iobst S."/>
            <person name="Hsiao J."/>
            <person name="de Vazeille A.R."/>
            <person name="Salzberg S.L."/>
            <person name="White O."/>
            <person name="Fraser C.M."/>
            <person name="Yu Y."/>
            <person name="Kim H."/>
            <person name="Rambo T."/>
            <person name="Currie J."/>
            <person name="Collura K."/>
            <person name="Kernodle-Thompson S."/>
            <person name="Wei F."/>
            <person name="Kudrna K."/>
            <person name="Ammiraju J.S.S."/>
            <person name="Luo M."/>
            <person name="Goicoechea J.L."/>
            <person name="Wing R.A."/>
            <person name="Henry D."/>
            <person name="Oates R."/>
            <person name="Palmer M."/>
            <person name="Pries G."/>
            <person name="Saski C."/>
            <person name="Simmons J."/>
            <person name="Soderlund C."/>
            <person name="Nelson W."/>
            <person name="de la Bastide M."/>
            <person name="Spiegel L."/>
            <person name="Nascimento L."/>
            <person name="Huang E."/>
            <person name="Preston R."/>
            <person name="Zutavern T."/>
            <person name="Palmer L."/>
            <person name="O'Shaughnessy A."/>
            <person name="Dike S."/>
            <person name="McCombie W.R."/>
            <person name="Minx P."/>
            <person name="Cordum H."/>
            <person name="Wilson R."/>
            <person name="Jin W."/>
            <person name="Lee H.R."/>
            <person name="Jiang J."/>
            <person name="Jackson S."/>
        </authorList>
    </citation>
    <scope>NUCLEOTIDE SEQUENCE [LARGE SCALE GENOMIC DNA]</scope>
    <source>
        <strain>cv. Nipponbare</strain>
    </source>
</reference>
<reference key="2">
    <citation type="journal article" date="2005" name="Nature">
        <title>The map-based sequence of the rice genome.</title>
        <authorList>
            <consortium name="International rice genome sequencing project (IRGSP)"/>
        </authorList>
    </citation>
    <scope>NUCLEOTIDE SEQUENCE [LARGE SCALE GENOMIC DNA]</scope>
    <source>
        <strain>cv. Nipponbare</strain>
    </source>
</reference>
<reference key="3">
    <citation type="journal article" date="2008" name="Nucleic Acids Res.">
        <title>The rice annotation project database (RAP-DB): 2008 update.</title>
        <authorList>
            <consortium name="The rice annotation project (RAP)"/>
        </authorList>
    </citation>
    <scope>GENOME REANNOTATION</scope>
    <source>
        <strain>cv. Nipponbare</strain>
    </source>
</reference>
<reference key="4">
    <citation type="journal article" date="2013" name="Rice">
        <title>Improvement of the Oryza sativa Nipponbare reference genome using next generation sequence and optical map data.</title>
        <authorList>
            <person name="Kawahara Y."/>
            <person name="de la Bastide M."/>
            <person name="Hamilton J.P."/>
            <person name="Kanamori H."/>
            <person name="McCombie W.R."/>
            <person name="Ouyang S."/>
            <person name="Schwartz D.C."/>
            <person name="Tanaka T."/>
            <person name="Wu J."/>
            <person name="Zhou S."/>
            <person name="Childs K.L."/>
            <person name="Davidson R.M."/>
            <person name="Lin H."/>
            <person name="Quesada-Ocampo L."/>
            <person name="Vaillancourt B."/>
            <person name="Sakai H."/>
            <person name="Lee S.S."/>
            <person name="Kim J."/>
            <person name="Numa H."/>
            <person name="Itoh T."/>
            <person name="Buell C.R."/>
            <person name="Matsumoto T."/>
        </authorList>
    </citation>
    <scope>GENOME REANNOTATION</scope>
    <source>
        <strain>cv. Nipponbare</strain>
    </source>
</reference>
<reference key="5">
    <citation type="journal article" date="2007" name="J. Exp. Bot.">
        <title>Genome-wide analysis of the UDP-glucose dehydrogenase gene family in Arabidopsis, a key enzyme for matrix polysaccharides in cell walls.</title>
        <authorList>
            <person name="Klinghammer M."/>
            <person name="Tenhaken R."/>
        </authorList>
    </citation>
    <scope>GENE FAMILY</scope>
    <scope>NOMENCLATURE</scope>
</reference>
<gene>
    <name type="primary">UGD1</name>
    <name type="ordered locus">Os03g0425600</name>
    <name type="ordered locus">LOC_Os03g31210</name>
    <name type="ORF">OSJNBa0020H02.10</name>
</gene>
<comment type="function">
    <text evidence="1">Involved in the biosynthesis of UDP-glucuronic acid (UDP-GlcA), providing nucleotide sugars for cell-wall polymers.</text>
</comment>
<comment type="catalytic activity">
    <reaction>
        <text>UDP-alpha-D-glucose + 2 NAD(+) + H2O = UDP-alpha-D-glucuronate + 2 NADH + 3 H(+)</text>
        <dbReference type="Rhea" id="RHEA:23596"/>
        <dbReference type="ChEBI" id="CHEBI:15377"/>
        <dbReference type="ChEBI" id="CHEBI:15378"/>
        <dbReference type="ChEBI" id="CHEBI:57540"/>
        <dbReference type="ChEBI" id="CHEBI:57945"/>
        <dbReference type="ChEBI" id="CHEBI:58052"/>
        <dbReference type="ChEBI" id="CHEBI:58885"/>
        <dbReference type="EC" id="1.1.1.22"/>
    </reaction>
</comment>
<comment type="pathway">
    <text>Nucleotide-sugar biosynthesis; UDP-alpha-D-glucuronate biosynthesis; UDP-alpha-D-glucuronate from UDP-alpha-D-glucose: step 1/1.</text>
</comment>
<comment type="similarity">
    <text evidence="2">Belongs to the UDP-glucose/GDP-mannose dehydrogenase family.</text>
</comment>
<comment type="sequence caution" evidence="2">
    <conflict type="erroneous gene model prediction">
        <sequence resource="EMBL-CDS" id="ABF96712"/>
    </conflict>
</comment>
<comment type="sequence caution" evidence="2">
    <conflict type="erroneous initiation">
        <sequence resource="EMBL-CDS" id="BAF12319"/>
    </conflict>
    <text>Truncated N-terminus.</text>
</comment>
<evidence type="ECO:0000250" key="1"/>
<evidence type="ECO:0000305" key="2"/>
<feature type="chain" id="PRO_0000422266" description="UDP-glucose 6-dehydrogenase 1">
    <location>
        <begin position="1"/>
        <end position="481"/>
    </location>
</feature>
<feature type="active site" description="Nucleophile" evidence="1">
    <location>
        <position position="273"/>
    </location>
</feature>
<feature type="binding site" evidence="1">
    <location>
        <begin position="8"/>
        <end position="13"/>
    </location>
    <ligand>
        <name>NAD(+)</name>
        <dbReference type="ChEBI" id="CHEBI:57540"/>
    </ligand>
</feature>
<feature type="binding site" evidence="1">
    <location>
        <position position="33"/>
    </location>
    <ligand>
        <name>NAD(+)</name>
        <dbReference type="ChEBI" id="CHEBI:57540"/>
    </ligand>
</feature>
<feature type="binding site" evidence="1">
    <location>
        <position position="38"/>
    </location>
    <ligand>
        <name>NAD(+)</name>
        <dbReference type="ChEBI" id="CHEBI:57540"/>
    </ligand>
</feature>
<feature type="binding site" evidence="1">
    <location>
        <begin position="86"/>
        <end position="90"/>
    </location>
    <ligand>
        <name>NAD(+)</name>
        <dbReference type="ChEBI" id="CHEBI:57540"/>
    </ligand>
</feature>
<feature type="binding site" evidence="1">
    <location>
        <begin position="127"/>
        <end position="128"/>
    </location>
    <ligand>
        <name>NAD(+)</name>
        <dbReference type="ChEBI" id="CHEBI:57540"/>
    </ligand>
</feature>
<feature type="binding site" evidence="1">
    <location>
        <begin position="158"/>
        <end position="162"/>
    </location>
    <ligand>
        <name>substrate</name>
    </ligand>
</feature>
<feature type="binding site" evidence="1">
    <location>
        <position position="162"/>
    </location>
    <ligand>
        <name>NAD(+)</name>
        <dbReference type="ChEBI" id="CHEBI:57540"/>
    </ligand>
</feature>
<feature type="binding site" evidence="1">
    <location>
        <begin position="217"/>
        <end position="224"/>
    </location>
    <ligand>
        <name>substrate</name>
    </ligand>
</feature>
<feature type="binding site" evidence="1">
    <location>
        <begin position="257"/>
        <end position="270"/>
    </location>
    <ligand>
        <name>substrate</name>
    </ligand>
</feature>
<feature type="binding site" evidence="1">
    <location>
        <begin position="273"/>
        <end position="276"/>
    </location>
    <ligand>
        <name>NAD(+)</name>
        <dbReference type="ChEBI" id="CHEBI:57540"/>
    </ligand>
</feature>
<feature type="binding site" evidence="1">
    <location>
        <begin position="335"/>
        <end position="336"/>
    </location>
    <ligand>
        <name>substrate</name>
    </ligand>
</feature>
<feature type="binding site" evidence="1">
    <location>
        <position position="343"/>
    </location>
    <ligand>
        <name>NAD(+)</name>
        <dbReference type="ChEBI" id="CHEBI:57540"/>
    </ligand>
</feature>
<feature type="binding site" evidence="1">
    <location>
        <position position="448"/>
    </location>
    <ligand>
        <name>substrate</name>
    </ligand>
</feature>
<feature type="modified residue" description="Phosphoserine" evidence="1">
    <location>
        <position position="394"/>
    </location>
</feature>
<protein>
    <recommendedName>
        <fullName>UDP-glucose 6-dehydrogenase 1</fullName>
        <shortName>UDP-Glc dehydrogenase 1</shortName>
        <shortName>UDP-GlcDH 1</shortName>
        <shortName>UDPGDH 1</shortName>
        <ecNumber>1.1.1.22</ecNumber>
    </recommendedName>
    <alternativeName>
        <fullName>Os-UGD1</fullName>
    </alternativeName>
</protein>
<organism>
    <name type="scientific">Oryza sativa subsp. japonica</name>
    <name type="common">Rice</name>
    <dbReference type="NCBI Taxonomy" id="39947"/>
    <lineage>
        <taxon>Eukaryota</taxon>
        <taxon>Viridiplantae</taxon>
        <taxon>Streptophyta</taxon>
        <taxon>Embryophyta</taxon>
        <taxon>Tracheophyta</taxon>
        <taxon>Spermatophyta</taxon>
        <taxon>Magnoliopsida</taxon>
        <taxon>Liliopsida</taxon>
        <taxon>Poales</taxon>
        <taxon>Poaceae</taxon>
        <taxon>BOP clade</taxon>
        <taxon>Oryzoideae</taxon>
        <taxon>Oryzeae</taxon>
        <taxon>Oryzinae</taxon>
        <taxon>Oryza</taxon>
        <taxon>Oryza sativa</taxon>
    </lineage>
</organism>